<keyword id="KW-1003">Cell membrane</keyword>
<keyword id="KW-0472">Membrane</keyword>
<keyword id="KW-1185">Reference proteome</keyword>
<keyword id="KW-0812">Transmembrane</keyword>
<keyword id="KW-1133">Transmembrane helix</keyword>
<gene>
    <name type="primary">tcpD</name>
    <name type="ordered locus">VC_0833</name>
</gene>
<proteinExistence type="predicted"/>
<protein>
    <recommendedName>
        <fullName>Toxin coregulated pilus biosynthesis protein D</fullName>
    </recommendedName>
    <alternativeName>
        <fullName>TCP pilus biosynthesis protein TcpD</fullName>
    </alternativeName>
</protein>
<organism>
    <name type="scientific">Vibrio cholerae serotype O1 (strain ATCC 39315 / El Tor Inaba N16961)</name>
    <dbReference type="NCBI Taxonomy" id="243277"/>
    <lineage>
        <taxon>Bacteria</taxon>
        <taxon>Pseudomonadati</taxon>
        <taxon>Pseudomonadota</taxon>
        <taxon>Gammaproteobacteria</taxon>
        <taxon>Vibrionales</taxon>
        <taxon>Vibrionaceae</taxon>
        <taxon>Vibrio</taxon>
    </lineage>
</organism>
<name>TCPD_VIBCH</name>
<feature type="chain" id="PRO_0000072465" description="Toxin coregulated pilus biosynthesis protein D">
    <location>
        <begin position="1"/>
        <end position="278"/>
    </location>
</feature>
<feature type="transmembrane region" description="Helical" evidence="1">
    <location>
        <begin position="30"/>
        <end position="50"/>
    </location>
</feature>
<feature type="sequence conflict" description="In Ref. 1; CAA45460." evidence="2" ref="1">
    <original>D</original>
    <variation>A</variation>
    <location>
        <position position="79"/>
    </location>
</feature>
<evidence type="ECO:0000255" key="1"/>
<evidence type="ECO:0000305" key="2"/>
<accession>P29491</accession>
<accession>Q9KTR2</accession>
<dbReference type="EMBL" id="X64098">
    <property type="protein sequence ID" value="CAA45460.1"/>
    <property type="status" value="ALT_INIT"/>
    <property type="molecule type" value="Genomic_DNA"/>
</dbReference>
<dbReference type="EMBL" id="AE003852">
    <property type="protein sequence ID" value="AAF93996.1"/>
    <property type="molecule type" value="Genomic_DNA"/>
</dbReference>
<dbReference type="PIR" id="D82275">
    <property type="entry name" value="D82275"/>
</dbReference>
<dbReference type="RefSeq" id="NP_230481.1">
    <property type="nucleotide sequence ID" value="NC_002505.1"/>
</dbReference>
<dbReference type="RefSeq" id="WP_001880631.1">
    <property type="nucleotide sequence ID" value="NZ_LT906614.1"/>
</dbReference>
<dbReference type="STRING" id="243277.VC_0833"/>
<dbReference type="DNASU" id="2614500"/>
<dbReference type="EnsemblBacteria" id="AAF93996">
    <property type="protein sequence ID" value="AAF93996"/>
    <property type="gene ID" value="VC_0833"/>
</dbReference>
<dbReference type="KEGG" id="vch:VC_0833"/>
<dbReference type="PATRIC" id="fig|243277.26.peg.794"/>
<dbReference type="eggNOG" id="ENOG5031NZT">
    <property type="taxonomic scope" value="Bacteria"/>
</dbReference>
<dbReference type="HOGENOM" id="CLU_1000937_0_0_6"/>
<dbReference type="Proteomes" id="UP000000584">
    <property type="component" value="Chromosome 1"/>
</dbReference>
<dbReference type="GO" id="GO:0005886">
    <property type="term" value="C:plasma membrane"/>
    <property type="evidence" value="ECO:0007669"/>
    <property type="project" value="UniProtKB-SubCell"/>
</dbReference>
<sequence length="278" mass="32276">MVNVIMKISSLKKGSNFSINIKNIKLDKKLLVAIIFLVLSILGGGAYLYYENEKTKKLEQARLQKIQKENSDKQTYLSDFKSAFEGLDYQALTGFYDVLRSDIDFFRVNNWLLDVMDCNVNCNLAFKRGSFDTFTYLEMNRNGAVIKPQFDQNKLQFANVDYISGFRSIYLKDLTEQERDKSENIIEQCSTKLSELYNLQLLMKEQVKFKINLPRNVTSISGYDWVKNSDIKFGSIEIENMPEKNLGLMKNIMNNSMMITSISLQNSSFKSKLNYYCY</sequence>
<comment type="function">
    <text>Involved in TCP pilus biogenesis.</text>
</comment>
<comment type="subcellular location">
    <subcellularLocation>
        <location evidence="2">Cell membrane</location>
        <topology evidence="2">Single-pass membrane protein</topology>
    </subcellularLocation>
</comment>
<comment type="sequence caution" evidence="2">
    <conflict type="erroneous initiation">
        <sequence resource="EMBL-CDS" id="CAA45460"/>
    </conflict>
</comment>
<reference key="1">
    <citation type="journal article" date="1993" name="Gene">
        <title>Genetic organization and sequence of the promoter-distal region of the tcp gene cluster of Vibrio cholerae.</title>
        <authorList>
            <person name="Ogierman M.A."/>
            <person name="Zabihi S."/>
            <person name="Mourtzios L."/>
            <person name="Manning P.A."/>
        </authorList>
    </citation>
    <scope>NUCLEOTIDE SEQUENCE [GENOMIC DNA]</scope>
    <source>
        <strain>Classical Inaba Z17561 / Serotype O1</strain>
    </source>
</reference>
<reference key="2">
    <citation type="journal article" date="2000" name="Nature">
        <title>DNA sequence of both chromosomes of the cholera pathogen Vibrio cholerae.</title>
        <authorList>
            <person name="Heidelberg J.F."/>
            <person name="Eisen J.A."/>
            <person name="Nelson W.C."/>
            <person name="Clayton R.A."/>
            <person name="Gwinn M.L."/>
            <person name="Dodson R.J."/>
            <person name="Haft D.H."/>
            <person name="Hickey E.K."/>
            <person name="Peterson J.D."/>
            <person name="Umayam L.A."/>
            <person name="Gill S.R."/>
            <person name="Nelson K.E."/>
            <person name="Read T.D."/>
            <person name="Tettelin H."/>
            <person name="Richardson D.L."/>
            <person name="Ermolaeva M.D."/>
            <person name="Vamathevan J.J."/>
            <person name="Bass S."/>
            <person name="Qin H."/>
            <person name="Dragoi I."/>
            <person name="Sellers P."/>
            <person name="McDonald L.A."/>
            <person name="Utterback T.R."/>
            <person name="Fleischmann R.D."/>
            <person name="Nierman W.C."/>
            <person name="White O."/>
            <person name="Salzberg S.L."/>
            <person name="Smith H.O."/>
            <person name="Colwell R.R."/>
            <person name="Mekalanos J.J."/>
            <person name="Venter J.C."/>
            <person name="Fraser C.M."/>
        </authorList>
    </citation>
    <scope>NUCLEOTIDE SEQUENCE [LARGE SCALE GENOMIC DNA]</scope>
    <source>
        <strain>ATCC 39315 / El Tor Inaba N16961</strain>
    </source>
</reference>